<organism>
    <name type="scientific">Arabidopsis thaliana</name>
    <name type="common">Mouse-ear cress</name>
    <dbReference type="NCBI Taxonomy" id="3702"/>
    <lineage>
        <taxon>Eukaryota</taxon>
        <taxon>Viridiplantae</taxon>
        <taxon>Streptophyta</taxon>
        <taxon>Embryophyta</taxon>
        <taxon>Tracheophyta</taxon>
        <taxon>Spermatophyta</taxon>
        <taxon>Magnoliopsida</taxon>
        <taxon>eudicotyledons</taxon>
        <taxon>Gunneridae</taxon>
        <taxon>Pentapetalae</taxon>
        <taxon>rosids</taxon>
        <taxon>malvids</taxon>
        <taxon>Brassicales</taxon>
        <taxon>Brassicaceae</taxon>
        <taxon>Camelineae</taxon>
        <taxon>Arabidopsis</taxon>
    </lineage>
</organism>
<proteinExistence type="evidence at protein level"/>
<name>ACOX3_ARATH</name>
<reference key="1">
    <citation type="journal article" date="2000" name="Plant Physiol.">
        <title>ACX3, a novel medium-chain acyl-coenzyme A oxidase from Arabidopsis.</title>
        <authorList>
            <person name="Froman B.E."/>
            <person name="Edwards P.C."/>
            <person name="Bursch A.G."/>
            <person name="Dehesh K."/>
        </authorList>
    </citation>
    <scope>NUCLEOTIDE SEQUENCE [MRNA]</scope>
    <scope>CHARACTERIZATION</scope>
    <scope>TISSUE SPECIFICITY</scope>
    <scope>DEVELOPMENTAL STAGE</scope>
    <source>
        <strain>cv. No-0</strain>
    </source>
</reference>
<reference key="2">
    <citation type="journal article" date="2000" name="J. Biol. Chem.">
        <title>Promoter trapping of a novel medium-chain acyl-CoA oxidase, which is induced transcriptionally during Arabidopsis seed germination.</title>
        <authorList>
            <person name="Eastmond P.J."/>
            <person name="Hooks M.A."/>
            <person name="Williams D."/>
            <person name="Lange P."/>
            <person name="Bechtold N."/>
            <person name="Sarrobert C."/>
            <person name="Nussaume L."/>
            <person name="Graham I.A."/>
        </authorList>
    </citation>
    <scope>NUCLEOTIDE SEQUENCE [MRNA]</scope>
    <scope>CHARACTERIZATION</scope>
    <scope>TISSUE SPECIFICITY</scope>
    <scope>SUBCELLULAR LOCATION</scope>
    <source>
        <strain>cv. Columbia</strain>
        <tissue>Hypocotyl</tissue>
    </source>
</reference>
<reference key="3">
    <citation type="journal article" date="2000" name="Nature">
        <title>Sequence and analysis of chromosome 1 of the plant Arabidopsis thaliana.</title>
        <authorList>
            <person name="Theologis A."/>
            <person name="Ecker J.R."/>
            <person name="Palm C.J."/>
            <person name="Federspiel N.A."/>
            <person name="Kaul S."/>
            <person name="White O."/>
            <person name="Alonso J."/>
            <person name="Altafi H."/>
            <person name="Araujo R."/>
            <person name="Bowman C.L."/>
            <person name="Brooks S.Y."/>
            <person name="Buehler E."/>
            <person name="Chan A."/>
            <person name="Chao Q."/>
            <person name="Chen H."/>
            <person name="Cheuk R.F."/>
            <person name="Chin C.W."/>
            <person name="Chung M.K."/>
            <person name="Conn L."/>
            <person name="Conway A.B."/>
            <person name="Conway A.R."/>
            <person name="Creasy T.H."/>
            <person name="Dewar K."/>
            <person name="Dunn P."/>
            <person name="Etgu P."/>
            <person name="Feldblyum T.V."/>
            <person name="Feng J.-D."/>
            <person name="Fong B."/>
            <person name="Fujii C.Y."/>
            <person name="Gill J.E."/>
            <person name="Goldsmith A.D."/>
            <person name="Haas B."/>
            <person name="Hansen N.F."/>
            <person name="Hughes B."/>
            <person name="Huizar L."/>
            <person name="Hunter J.L."/>
            <person name="Jenkins J."/>
            <person name="Johnson-Hopson C."/>
            <person name="Khan S."/>
            <person name="Khaykin E."/>
            <person name="Kim C.J."/>
            <person name="Koo H.L."/>
            <person name="Kremenetskaia I."/>
            <person name="Kurtz D.B."/>
            <person name="Kwan A."/>
            <person name="Lam B."/>
            <person name="Langin-Hooper S."/>
            <person name="Lee A."/>
            <person name="Lee J.M."/>
            <person name="Lenz C.A."/>
            <person name="Li J.H."/>
            <person name="Li Y.-P."/>
            <person name="Lin X."/>
            <person name="Liu S.X."/>
            <person name="Liu Z.A."/>
            <person name="Luros J.S."/>
            <person name="Maiti R."/>
            <person name="Marziali A."/>
            <person name="Militscher J."/>
            <person name="Miranda M."/>
            <person name="Nguyen M."/>
            <person name="Nierman W.C."/>
            <person name="Osborne B.I."/>
            <person name="Pai G."/>
            <person name="Peterson J."/>
            <person name="Pham P.K."/>
            <person name="Rizzo M."/>
            <person name="Rooney T."/>
            <person name="Rowley D."/>
            <person name="Sakano H."/>
            <person name="Salzberg S.L."/>
            <person name="Schwartz J.R."/>
            <person name="Shinn P."/>
            <person name="Southwick A.M."/>
            <person name="Sun H."/>
            <person name="Tallon L.J."/>
            <person name="Tambunga G."/>
            <person name="Toriumi M.J."/>
            <person name="Town C.D."/>
            <person name="Utterback T."/>
            <person name="Van Aken S."/>
            <person name="Vaysberg M."/>
            <person name="Vysotskaia V.S."/>
            <person name="Walker M."/>
            <person name="Wu D."/>
            <person name="Yu G."/>
            <person name="Fraser C.M."/>
            <person name="Venter J.C."/>
            <person name="Davis R.W."/>
        </authorList>
    </citation>
    <scope>NUCLEOTIDE SEQUENCE [LARGE SCALE GENOMIC DNA]</scope>
    <source>
        <strain>cv. Columbia</strain>
    </source>
</reference>
<reference key="4">
    <citation type="journal article" date="2017" name="Plant J.">
        <title>Araport11: a complete reannotation of the Arabidopsis thaliana reference genome.</title>
        <authorList>
            <person name="Cheng C.Y."/>
            <person name="Krishnakumar V."/>
            <person name="Chan A.P."/>
            <person name="Thibaud-Nissen F."/>
            <person name="Schobel S."/>
            <person name="Town C.D."/>
        </authorList>
    </citation>
    <scope>GENOME REANNOTATION</scope>
    <source>
        <strain>cv. Columbia</strain>
    </source>
</reference>
<reference key="5">
    <citation type="journal article" date="2003" name="Science">
        <title>Empirical analysis of transcriptional activity in the Arabidopsis genome.</title>
        <authorList>
            <person name="Yamada K."/>
            <person name="Lim J."/>
            <person name="Dale J.M."/>
            <person name="Chen H."/>
            <person name="Shinn P."/>
            <person name="Palm C.J."/>
            <person name="Southwick A.M."/>
            <person name="Wu H.C."/>
            <person name="Kim C.J."/>
            <person name="Nguyen M."/>
            <person name="Pham P.K."/>
            <person name="Cheuk R.F."/>
            <person name="Karlin-Newmann G."/>
            <person name="Liu S.X."/>
            <person name="Lam B."/>
            <person name="Sakano H."/>
            <person name="Wu T."/>
            <person name="Yu G."/>
            <person name="Miranda M."/>
            <person name="Quach H.L."/>
            <person name="Tripp M."/>
            <person name="Chang C.H."/>
            <person name="Lee J.M."/>
            <person name="Toriumi M.J."/>
            <person name="Chan M.M."/>
            <person name="Tang C.C."/>
            <person name="Onodera C.S."/>
            <person name="Deng J.M."/>
            <person name="Akiyama K."/>
            <person name="Ansari Y."/>
            <person name="Arakawa T."/>
            <person name="Banh J."/>
            <person name="Banno F."/>
            <person name="Bowser L."/>
            <person name="Brooks S.Y."/>
            <person name="Carninci P."/>
            <person name="Chao Q."/>
            <person name="Choy N."/>
            <person name="Enju A."/>
            <person name="Goldsmith A.D."/>
            <person name="Gurjal M."/>
            <person name="Hansen N.F."/>
            <person name="Hayashizaki Y."/>
            <person name="Johnson-Hopson C."/>
            <person name="Hsuan V.W."/>
            <person name="Iida K."/>
            <person name="Karnes M."/>
            <person name="Khan S."/>
            <person name="Koesema E."/>
            <person name="Ishida J."/>
            <person name="Jiang P.X."/>
            <person name="Jones T."/>
            <person name="Kawai J."/>
            <person name="Kamiya A."/>
            <person name="Meyers C."/>
            <person name="Nakajima M."/>
            <person name="Narusaka M."/>
            <person name="Seki M."/>
            <person name="Sakurai T."/>
            <person name="Satou M."/>
            <person name="Tamse R."/>
            <person name="Vaysberg M."/>
            <person name="Wallender E.K."/>
            <person name="Wong C."/>
            <person name="Yamamura Y."/>
            <person name="Yuan S."/>
            <person name="Shinozaki K."/>
            <person name="Davis R.W."/>
            <person name="Theologis A."/>
            <person name="Ecker J.R."/>
        </authorList>
    </citation>
    <scope>NUCLEOTIDE SEQUENCE [LARGE SCALE MRNA]</scope>
    <source>
        <strain>cv. Columbia</strain>
    </source>
</reference>
<reference key="6">
    <citation type="submission" date="2004-09" db="EMBL/GenBank/DDBJ databases">
        <title>Large-scale analysis of RIKEN Arabidopsis full-length (RAFL) cDNAs.</title>
        <authorList>
            <person name="Totoki Y."/>
            <person name="Seki M."/>
            <person name="Ishida J."/>
            <person name="Nakajima M."/>
            <person name="Enju A."/>
            <person name="Kamiya A."/>
            <person name="Narusaka M."/>
            <person name="Shin-i T."/>
            <person name="Nakagawa M."/>
            <person name="Sakamoto N."/>
            <person name="Oishi K."/>
            <person name="Kohara Y."/>
            <person name="Kobayashi M."/>
            <person name="Toyoda A."/>
            <person name="Sakaki Y."/>
            <person name="Sakurai T."/>
            <person name="Iida K."/>
            <person name="Akiyama K."/>
            <person name="Satou M."/>
            <person name="Toyoda T."/>
            <person name="Konagaya A."/>
            <person name="Carninci P."/>
            <person name="Kawai J."/>
            <person name="Hayashizaki Y."/>
            <person name="Shinozaki K."/>
        </authorList>
    </citation>
    <scope>NUCLEOTIDE SEQUENCE [LARGE SCALE MRNA]</scope>
    <source>
        <strain>cv. Columbia</strain>
    </source>
</reference>
<reference key="7">
    <citation type="journal article" date="2004" name="Plant Physiol.">
        <title>Gene-specific involvement of beta-oxidation in wound-activated responses in Arabidopsis.</title>
        <authorList>
            <person name="Cruz-Castillo M."/>
            <person name="Martinez C."/>
            <person name="Buchala A."/>
            <person name="Metraux J.-P."/>
            <person name="Leon J."/>
        </authorList>
    </citation>
    <scope>INDUCTION</scope>
</reference>
<sequence>MSDNRALRRAHVLANHILQSNPPSSNPSLSRELCLQYSPPELNESYGFDVKEMRKLLDGHNVVDRDWIYGLMMQSNLFNRKERGGKIFVSPDYNQTMEQQREITMKRIWYLLENGVFKGWLTETGPEAELRKLALLEVCGIYDHSVSIKVGVHFFLWGNAVKFFGTKRHHEKWLKNTEDYVVKGCFAMTELGHGSNVRGIETVTTYDPKTEEFVINTPCESAQKYWIGGAANHATHTIVFSQLHINGTNQGVHAFIAQIRDQDGSICPNIRIADCGHKIGLNGVDNGRIWFDNLRIPRENLLNAVADVSSDGKYVSSIKDPDQRFGAFMAPLTSGRVTIASSAIYSAKVGLSIAIRYSLSRRAFSVTANGPEVLLLDYPSHQRRLLPLLAKTYAMSFAANELKMIYVKRTPETNKAIHVVSSGFKAVLTWHNMHTLQECREAVGGQGVKTENLVGQLKGEFDVQTTFEGDNNVLMQQVSKALFAEYVSCKKRNKPFKGLGLEHMNSPRPVLPTQLTSSTLRCSQFQTNVFCLRERDLLEQFTSEVAQLQGRGESREFSFLLSHQLAEDLGKAFTEKAILQTILDAEAKLPTGSVKDVLGLVRSMYALISLEEDPSLLRYGYLSQDNVGDVRREVSKLCGELRPHALALVTSFGIPDSFLSPIAFNWVEANAWSSV</sequence>
<comment type="function">
    <text>Catalyzes the desaturation of medium-chain acyl-CoAs to 2-trans-enoyl-CoAs. Active on C8:0- to C14:0-CoA with a maximal activity on C12:0-CoA.</text>
</comment>
<comment type="catalytic activity">
    <reaction>
        <text>a 2,3-saturated acyl-CoA + O2 = a (2E)-enoyl-CoA + H2O2</text>
        <dbReference type="Rhea" id="RHEA:38959"/>
        <dbReference type="ChEBI" id="CHEBI:15379"/>
        <dbReference type="ChEBI" id="CHEBI:16240"/>
        <dbReference type="ChEBI" id="CHEBI:58856"/>
        <dbReference type="ChEBI" id="CHEBI:65111"/>
        <dbReference type="EC" id="1.3.3.6"/>
    </reaction>
</comment>
<comment type="cofactor">
    <cofactor>
        <name>FAD</name>
        <dbReference type="ChEBI" id="CHEBI:57692"/>
    </cofactor>
</comment>
<comment type="biophysicochemical properties">
    <kinetics>
        <KM>3.7 uM for lauroyl-CoA</KM>
    </kinetics>
    <phDependence>
        <text>Optimum pH is 8.5-9.0.</text>
    </phDependence>
</comment>
<comment type="pathway">
    <text>Lipid metabolism; peroxisomal fatty acid beta-oxidation.</text>
</comment>
<comment type="subcellular location">
    <subcellularLocation>
        <location evidence="3">Peroxisome</location>
    </subcellularLocation>
</comment>
<comment type="tissue specificity">
    <text evidence="2 3">Most abundant in flowers and senescing rosette leaves. Lower expression in hypocotyls, stems, young rosette leaves, cotyledons, cauline leaves and root tip of young seedlings.</text>
</comment>
<comment type="developmental stage">
    <text evidence="2">Induced by seed imbibition with a peak at day 2 and then declines steadily until day 7. Not detected in developing seeds. Constitutive expression in root axis.</text>
</comment>
<comment type="induction">
    <text evidence="4">Not induced by dehydration or abscisic acid (ABA).</text>
</comment>
<comment type="similarity">
    <text evidence="5">Belongs to the acyl-CoA oxidase family.</text>
</comment>
<protein>
    <recommendedName>
        <fullName>Acyl-coenzyme A oxidase 3, peroxisomal</fullName>
        <shortName>AOX 3</shortName>
        <shortName>Acyl-CoA oxidase 3</shortName>
        <ecNumber>1.3.3.6</ecNumber>
    </recommendedName>
    <alternativeName>
        <fullName>Medium-chain acyl-CoA oxidase</fullName>
        <shortName>AtCX3</shortName>
    </alternativeName>
</protein>
<accession>P0CZ23</accession>
<accession>Q9C839</accession>
<accession>Q9LKX5</accession>
<accession>Q9LLH9</accession>
<accession>Q9LMI8</accession>
<accession>Q9M7X6</accession>
<evidence type="ECO:0000255" key="1"/>
<evidence type="ECO:0000269" key="2">
    <source>
    </source>
</evidence>
<evidence type="ECO:0000269" key="3">
    <source>
    </source>
</evidence>
<evidence type="ECO:0000269" key="4">
    <source>
    </source>
</evidence>
<evidence type="ECO:0000305" key="5"/>
<dbReference type="EC" id="1.3.3.6"/>
<dbReference type="EMBL" id="AF207994">
    <property type="protein sequence ID" value="AAF73843.1"/>
    <property type="molecule type" value="mRNA"/>
</dbReference>
<dbReference type="EMBL" id="AF253474">
    <property type="protein sequence ID" value="AAF76137.1"/>
    <property type="molecule type" value="mRNA"/>
</dbReference>
<dbReference type="EMBL" id="AC068143">
    <property type="protein sequence ID" value="AAF82159.1"/>
    <property type="molecule type" value="Genomic_DNA"/>
</dbReference>
<dbReference type="EMBL" id="CP002684">
    <property type="protein sequence ID" value="AEE27972.1"/>
    <property type="molecule type" value="Genomic_DNA"/>
</dbReference>
<dbReference type="EMBL" id="AY099579">
    <property type="protein sequence ID" value="AAM20431.1"/>
    <property type="molecule type" value="mRNA"/>
</dbReference>
<dbReference type="EMBL" id="BT008413">
    <property type="protein sequence ID" value="AAP37772.1"/>
    <property type="molecule type" value="mRNA"/>
</dbReference>
<dbReference type="EMBL" id="AK176257">
    <property type="protein sequence ID" value="BAD44020.1"/>
    <property type="molecule type" value="mRNA"/>
</dbReference>
<dbReference type="PIR" id="G86198">
    <property type="entry name" value="G86198"/>
</dbReference>
<dbReference type="RefSeq" id="NP_172119.1">
    <property type="nucleotide sequence ID" value="NM_100511.3"/>
</dbReference>
<dbReference type="SMR" id="P0CZ23"/>
<dbReference type="BioGRID" id="22381">
    <property type="interactions" value="2"/>
</dbReference>
<dbReference type="FunCoup" id="P0CZ23">
    <property type="interactions" value="571"/>
</dbReference>
<dbReference type="IntAct" id="P0CZ23">
    <property type="interactions" value="1"/>
</dbReference>
<dbReference type="STRING" id="3702.P0CZ23"/>
<dbReference type="PaxDb" id="3702-AT1G06290.1"/>
<dbReference type="ProteomicsDB" id="244385"/>
<dbReference type="EnsemblPlants" id="AT1G06290.1">
    <property type="protein sequence ID" value="AT1G06290.1"/>
    <property type="gene ID" value="AT1G06290"/>
</dbReference>
<dbReference type="GeneID" id="837140"/>
<dbReference type="Gramene" id="AT1G06290.1">
    <property type="protein sequence ID" value="AT1G06290.1"/>
    <property type="gene ID" value="AT1G06290"/>
</dbReference>
<dbReference type="KEGG" id="ath:AT1G06290"/>
<dbReference type="Araport" id="AT1G06290"/>
<dbReference type="TAIR" id="AT1G06290">
    <property type="gene designation" value="ACX3"/>
</dbReference>
<dbReference type="eggNOG" id="KOG0135">
    <property type="taxonomic scope" value="Eukaryota"/>
</dbReference>
<dbReference type="HOGENOM" id="CLU_014629_4_0_1"/>
<dbReference type="InParanoid" id="P0CZ23"/>
<dbReference type="OMA" id="ITWSARD"/>
<dbReference type="PhylomeDB" id="P0CZ23"/>
<dbReference type="BioCyc" id="ARA:AT1G06290-MONOMER"/>
<dbReference type="BioCyc" id="MetaCyc:AT1G06290-MONOMER"/>
<dbReference type="BRENDA" id="1.3.3.6">
    <property type="organism ID" value="399"/>
</dbReference>
<dbReference type="UniPathway" id="UPA00661"/>
<dbReference type="PRO" id="PR:P0CZ23"/>
<dbReference type="Proteomes" id="UP000006548">
    <property type="component" value="Chromosome 1"/>
</dbReference>
<dbReference type="ExpressionAtlas" id="P0CZ23">
    <property type="expression patterns" value="baseline and differential"/>
</dbReference>
<dbReference type="GO" id="GO:0005576">
    <property type="term" value="C:extracellular region"/>
    <property type="evidence" value="ECO:0007005"/>
    <property type="project" value="TAIR"/>
</dbReference>
<dbReference type="GO" id="GO:0005777">
    <property type="term" value="C:peroxisome"/>
    <property type="evidence" value="ECO:0007669"/>
    <property type="project" value="UniProtKB-SubCell"/>
</dbReference>
<dbReference type="GO" id="GO:0003997">
    <property type="term" value="F:acyl-CoA oxidase activity"/>
    <property type="evidence" value="ECO:0000304"/>
    <property type="project" value="TAIR"/>
</dbReference>
<dbReference type="GO" id="GO:0071949">
    <property type="term" value="F:FAD binding"/>
    <property type="evidence" value="ECO:0007669"/>
    <property type="project" value="InterPro"/>
</dbReference>
<dbReference type="GO" id="GO:0006635">
    <property type="term" value="P:fatty acid beta-oxidation"/>
    <property type="evidence" value="ECO:0000304"/>
    <property type="project" value="TAIR"/>
</dbReference>
<dbReference type="GO" id="GO:0033540">
    <property type="term" value="P:fatty acid beta-oxidation using acyl-CoA oxidase"/>
    <property type="evidence" value="ECO:0007669"/>
    <property type="project" value="UniProtKB-UniPathway"/>
</dbReference>
<dbReference type="GO" id="GO:0051791">
    <property type="term" value="P:medium-chain fatty acid metabolic process"/>
    <property type="evidence" value="ECO:0000304"/>
    <property type="project" value="TAIR"/>
</dbReference>
<dbReference type="FunFam" id="1.20.140.10:FF:000007">
    <property type="entry name" value="Acyl-coenzyme A oxidase"/>
    <property type="match status" value="1"/>
</dbReference>
<dbReference type="FunFam" id="1.20.140.10:FF:000010">
    <property type="entry name" value="Acyl-coenzyme A oxidase"/>
    <property type="match status" value="1"/>
</dbReference>
<dbReference type="FunFam" id="2.40.110.10:FF:000005">
    <property type="entry name" value="Acyl-coenzyme A oxidase"/>
    <property type="match status" value="1"/>
</dbReference>
<dbReference type="Gene3D" id="2.40.110.10">
    <property type="entry name" value="Butyryl-CoA Dehydrogenase, subunit A, domain 2"/>
    <property type="match status" value="1"/>
</dbReference>
<dbReference type="Gene3D" id="1.20.140.10">
    <property type="entry name" value="Butyryl-CoA Dehydrogenase, subunit A, domain 3"/>
    <property type="match status" value="2"/>
</dbReference>
<dbReference type="InterPro" id="IPR055060">
    <property type="entry name" value="ACOX_C_alpha1"/>
</dbReference>
<dbReference type="InterPro" id="IPR006091">
    <property type="entry name" value="Acyl-CoA_Oxase/DH_mid-dom"/>
</dbReference>
<dbReference type="InterPro" id="IPR046373">
    <property type="entry name" value="Acyl-CoA_Oxase/DH_mid-dom_sf"/>
</dbReference>
<dbReference type="InterPro" id="IPR012258">
    <property type="entry name" value="Acyl-CoA_oxidase"/>
</dbReference>
<dbReference type="InterPro" id="IPR002655">
    <property type="entry name" value="Acyl-CoA_oxidase_C"/>
</dbReference>
<dbReference type="InterPro" id="IPR036250">
    <property type="entry name" value="AcylCo_DH-like_C"/>
</dbReference>
<dbReference type="InterPro" id="IPR009100">
    <property type="entry name" value="AcylCoA_DH/oxidase_NM_dom_sf"/>
</dbReference>
<dbReference type="PANTHER" id="PTHR10909:SF352">
    <property type="entry name" value="ACYL-COENZYME A OXIDASE-LIKE PROTEIN"/>
    <property type="match status" value="1"/>
</dbReference>
<dbReference type="PANTHER" id="PTHR10909">
    <property type="entry name" value="ELECTRON TRANSPORT OXIDOREDUCTASE"/>
    <property type="match status" value="1"/>
</dbReference>
<dbReference type="Pfam" id="PF01756">
    <property type="entry name" value="ACOX"/>
    <property type="match status" value="1"/>
</dbReference>
<dbReference type="Pfam" id="PF22924">
    <property type="entry name" value="ACOX_C_alpha1"/>
    <property type="match status" value="1"/>
</dbReference>
<dbReference type="Pfam" id="PF02770">
    <property type="entry name" value="Acyl-CoA_dh_M"/>
    <property type="match status" value="1"/>
</dbReference>
<dbReference type="PIRSF" id="PIRSF000168">
    <property type="entry name" value="Acyl-CoA_oxidase"/>
    <property type="match status" value="1"/>
</dbReference>
<dbReference type="SUPFAM" id="SSF47203">
    <property type="entry name" value="Acyl-CoA dehydrogenase C-terminal domain-like"/>
    <property type="match status" value="2"/>
</dbReference>
<dbReference type="SUPFAM" id="SSF56645">
    <property type="entry name" value="Acyl-CoA dehydrogenase NM domain-like"/>
    <property type="match status" value="1"/>
</dbReference>
<gene>
    <name type="primary">ACX3</name>
    <name type="ordered locus">At1g06290</name>
    <name type="ORF">F9P14.15</name>
    <name type="ORF">F9P14_11</name>
    <name type="ORF">T2D23.1</name>
</gene>
<feature type="transit peptide" description="Peroxisome" evidence="1">
    <location>
        <begin position="1"/>
        <end position="34"/>
    </location>
</feature>
<feature type="chain" id="PRO_0000000557" description="Acyl-coenzyme A oxidase 3, peroxisomal">
    <location>
        <begin position="35"/>
        <end position="675"/>
    </location>
</feature>
<feature type="binding site" evidence="1">
    <location>
        <begin position="442"/>
        <end position="457"/>
    </location>
    <ligand>
        <name>FAD</name>
        <dbReference type="ChEBI" id="CHEBI:57692"/>
    </ligand>
</feature>
<feature type="sequence conflict" description="In Ref. 1; AAF73843." evidence="5" ref="1">
    <original>L</original>
    <variation>V</variation>
    <location>
        <position position="33"/>
    </location>
</feature>
<keyword id="KW-0274">FAD</keyword>
<keyword id="KW-0276">Fatty acid metabolism</keyword>
<keyword id="KW-0285">Flavoprotein</keyword>
<keyword id="KW-0443">Lipid metabolism</keyword>
<keyword id="KW-0560">Oxidoreductase</keyword>
<keyword id="KW-0576">Peroxisome</keyword>
<keyword id="KW-1185">Reference proteome</keyword>
<keyword id="KW-0809">Transit peptide</keyword>